<comment type="function">
    <text evidence="1">F(1)F(0) ATP synthase produces ATP from ADP in the presence of a proton or sodium gradient. F-type ATPases consist of two structural domains, F(1) containing the extramembraneous catalytic core and F(0) containing the membrane proton channel, linked together by a central stalk and a peripheral stalk. During catalysis, ATP synthesis in the catalytic domain of F(1) is coupled via a rotary mechanism of the central stalk subunits to proton translocation.</text>
</comment>
<comment type="function">
    <text evidence="1">Key component of the F(0) channel; it plays a direct role in translocation across the membrane. A homomeric c-ring of between 10-14 subunits forms the central stalk rotor element with the F(1) delta and epsilon subunits.</text>
</comment>
<comment type="subunit">
    <text evidence="1">F-type ATPases have 2 components, F(1) - the catalytic core - and F(0) - the membrane proton channel. F(1) has five subunits: alpha(3), beta(3), gamma(1), delta(1), epsilon(1). F(0) has four main subunits: a(1), b(1), b'(1) and c(10-14). The alpha and beta chains form an alternating ring which encloses part of the gamma chain. F(1) is attached to F(0) by a central stalk formed by the gamma and epsilon chains, while a peripheral stalk is formed by the delta, b and b' chains.</text>
</comment>
<comment type="subcellular location">
    <subcellularLocation>
        <location evidence="1">Plastid</location>
        <location evidence="1">Chloroplast thylakoid membrane</location>
        <topology evidence="1">Multi-pass membrane protein</topology>
    </subcellularLocation>
</comment>
<comment type="miscellaneous">
    <text>In plastids the F-type ATPase is also known as CF(1)CF(0).</text>
</comment>
<comment type="similarity">
    <text evidence="1">Belongs to the ATPase C chain family.</text>
</comment>
<reference key="1">
    <citation type="journal article" date="2006" name="BMC Plant Biol.">
        <title>Rapid and accurate pyrosequencing of angiosperm plastid genomes.</title>
        <authorList>
            <person name="Moore M.J."/>
            <person name="Dhingra A."/>
            <person name="Soltis P.S."/>
            <person name="Shaw R."/>
            <person name="Farmerie W.G."/>
            <person name="Folta K.M."/>
            <person name="Soltis D.E."/>
        </authorList>
    </citation>
    <scope>NUCLEOTIDE SEQUENCE [LARGE SCALE GENOMIC DNA]</scope>
</reference>
<gene>
    <name evidence="1" type="primary">atpH</name>
</gene>
<keyword id="KW-0066">ATP synthesis</keyword>
<keyword id="KW-0138">CF(0)</keyword>
<keyword id="KW-0150">Chloroplast</keyword>
<keyword id="KW-0375">Hydrogen ion transport</keyword>
<keyword id="KW-0406">Ion transport</keyword>
<keyword id="KW-0446">Lipid-binding</keyword>
<keyword id="KW-0472">Membrane</keyword>
<keyword id="KW-0934">Plastid</keyword>
<keyword id="KW-0793">Thylakoid</keyword>
<keyword id="KW-0812">Transmembrane</keyword>
<keyword id="KW-1133">Transmembrane helix</keyword>
<keyword id="KW-0813">Transport</keyword>
<proteinExistence type="inferred from homology"/>
<name>ATPH_NANDO</name>
<organism>
    <name type="scientific">Nandina domestica</name>
    <name type="common">Heavenly bamboo</name>
    <dbReference type="NCBI Taxonomy" id="41776"/>
    <lineage>
        <taxon>Eukaryota</taxon>
        <taxon>Viridiplantae</taxon>
        <taxon>Streptophyta</taxon>
        <taxon>Embryophyta</taxon>
        <taxon>Tracheophyta</taxon>
        <taxon>Spermatophyta</taxon>
        <taxon>Magnoliopsida</taxon>
        <taxon>Ranunculales</taxon>
        <taxon>Berberidaceae</taxon>
        <taxon>Nandinoideae</taxon>
        <taxon>Nandineae</taxon>
        <taxon>Nandina</taxon>
    </lineage>
</organism>
<feature type="chain" id="PRO_0000362936" description="ATP synthase subunit c, chloroplastic">
    <location>
        <begin position="1"/>
        <end position="81"/>
    </location>
</feature>
<feature type="transmembrane region" description="Helical" evidence="1">
    <location>
        <begin position="3"/>
        <end position="23"/>
    </location>
</feature>
<feature type="transmembrane region" description="Helical" evidence="1">
    <location>
        <begin position="57"/>
        <end position="77"/>
    </location>
</feature>
<feature type="site" description="Reversibly protonated during proton transport" evidence="1">
    <location>
        <position position="61"/>
    </location>
</feature>
<accession>Q09FX4</accession>
<dbReference type="EMBL" id="DQ923117">
    <property type="protein sequence ID" value="ABI49850.1"/>
    <property type="molecule type" value="Genomic_DNA"/>
</dbReference>
<dbReference type="RefSeq" id="YP_740637.1">
    <property type="nucleotide sequence ID" value="NC_008336.1"/>
</dbReference>
<dbReference type="SMR" id="Q09FX4"/>
<dbReference type="GeneID" id="4271567"/>
<dbReference type="GO" id="GO:0009535">
    <property type="term" value="C:chloroplast thylakoid membrane"/>
    <property type="evidence" value="ECO:0007669"/>
    <property type="project" value="UniProtKB-SubCell"/>
</dbReference>
<dbReference type="GO" id="GO:0045259">
    <property type="term" value="C:proton-transporting ATP synthase complex"/>
    <property type="evidence" value="ECO:0007669"/>
    <property type="project" value="UniProtKB-KW"/>
</dbReference>
<dbReference type="GO" id="GO:0033177">
    <property type="term" value="C:proton-transporting two-sector ATPase complex, proton-transporting domain"/>
    <property type="evidence" value="ECO:0007669"/>
    <property type="project" value="InterPro"/>
</dbReference>
<dbReference type="GO" id="GO:0008289">
    <property type="term" value="F:lipid binding"/>
    <property type="evidence" value="ECO:0007669"/>
    <property type="project" value="UniProtKB-KW"/>
</dbReference>
<dbReference type="GO" id="GO:0046933">
    <property type="term" value="F:proton-transporting ATP synthase activity, rotational mechanism"/>
    <property type="evidence" value="ECO:0007669"/>
    <property type="project" value="UniProtKB-UniRule"/>
</dbReference>
<dbReference type="CDD" id="cd18183">
    <property type="entry name" value="ATP-synt_Fo_c_ATPH"/>
    <property type="match status" value="1"/>
</dbReference>
<dbReference type="FunFam" id="1.20.20.10:FF:000001">
    <property type="entry name" value="ATP synthase subunit c, chloroplastic"/>
    <property type="match status" value="1"/>
</dbReference>
<dbReference type="Gene3D" id="1.20.20.10">
    <property type="entry name" value="F1F0 ATP synthase subunit C"/>
    <property type="match status" value="1"/>
</dbReference>
<dbReference type="HAMAP" id="MF_01396">
    <property type="entry name" value="ATP_synth_c_bact"/>
    <property type="match status" value="1"/>
</dbReference>
<dbReference type="InterPro" id="IPR005953">
    <property type="entry name" value="ATP_synth_csu_bac/chlpt"/>
</dbReference>
<dbReference type="InterPro" id="IPR000454">
    <property type="entry name" value="ATP_synth_F0_csu"/>
</dbReference>
<dbReference type="InterPro" id="IPR020537">
    <property type="entry name" value="ATP_synth_F0_csu_DDCD_BS"/>
</dbReference>
<dbReference type="InterPro" id="IPR038662">
    <property type="entry name" value="ATP_synth_F0_csu_sf"/>
</dbReference>
<dbReference type="InterPro" id="IPR002379">
    <property type="entry name" value="ATPase_proteolipid_c-like_dom"/>
</dbReference>
<dbReference type="InterPro" id="IPR035921">
    <property type="entry name" value="F/V-ATP_Csub_sf"/>
</dbReference>
<dbReference type="NCBIfam" id="TIGR01260">
    <property type="entry name" value="ATP_synt_c"/>
    <property type="match status" value="1"/>
</dbReference>
<dbReference type="NCBIfam" id="NF005608">
    <property type="entry name" value="PRK07354.1"/>
    <property type="match status" value="1"/>
</dbReference>
<dbReference type="PANTHER" id="PTHR10031">
    <property type="entry name" value="ATP SYNTHASE LIPID-BINDING PROTEIN, MITOCHONDRIAL"/>
    <property type="match status" value="1"/>
</dbReference>
<dbReference type="PANTHER" id="PTHR10031:SF0">
    <property type="entry name" value="ATPASE PROTEIN 9"/>
    <property type="match status" value="1"/>
</dbReference>
<dbReference type="Pfam" id="PF00137">
    <property type="entry name" value="ATP-synt_C"/>
    <property type="match status" value="1"/>
</dbReference>
<dbReference type="PRINTS" id="PR00124">
    <property type="entry name" value="ATPASEC"/>
</dbReference>
<dbReference type="SUPFAM" id="SSF81333">
    <property type="entry name" value="F1F0 ATP synthase subunit C"/>
    <property type="match status" value="1"/>
</dbReference>
<dbReference type="PROSITE" id="PS00605">
    <property type="entry name" value="ATPASE_C"/>
    <property type="match status" value="1"/>
</dbReference>
<protein>
    <recommendedName>
        <fullName evidence="1">ATP synthase subunit c, chloroplastic</fullName>
    </recommendedName>
    <alternativeName>
        <fullName evidence="1">ATP synthase F(0) sector subunit c</fullName>
    </alternativeName>
    <alternativeName>
        <fullName evidence="1">ATPase subunit III</fullName>
    </alternativeName>
    <alternativeName>
        <fullName evidence="1">F-type ATPase subunit c</fullName>
        <shortName evidence="1">F-ATPase subunit c</shortName>
    </alternativeName>
    <alternativeName>
        <fullName evidence="1">Lipid-binding protein</fullName>
    </alternativeName>
</protein>
<sequence length="81" mass="7990">MNPLISAASVIAAGLAVGLASIGPGVGQGTAAGQAVEGIARQPEAEGKIRGTLLLSLAFMEALTIYGLVVALALLFANPFV</sequence>
<evidence type="ECO:0000255" key="1">
    <source>
        <dbReference type="HAMAP-Rule" id="MF_01396"/>
    </source>
</evidence>
<geneLocation type="chloroplast"/>